<organism>
    <name type="scientific">Shewanella frigidimarina (strain NCIMB 400)</name>
    <dbReference type="NCBI Taxonomy" id="318167"/>
    <lineage>
        <taxon>Bacteria</taxon>
        <taxon>Pseudomonadati</taxon>
        <taxon>Pseudomonadota</taxon>
        <taxon>Gammaproteobacteria</taxon>
        <taxon>Alteromonadales</taxon>
        <taxon>Shewanellaceae</taxon>
        <taxon>Shewanella</taxon>
    </lineage>
</organism>
<keyword id="KW-0418">Kinase</keyword>
<keyword id="KW-0547">Nucleotide-binding</keyword>
<keyword id="KW-1185">Reference proteome</keyword>
<keyword id="KW-0723">Serine/threonine-protein kinase</keyword>
<keyword id="KW-0808">Transferase</keyword>
<feature type="chain" id="PRO_0000316735" description="Putative phosphoenolpyruvate synthase regulatory protein">
    <location>
        <begin position="1"/>
        <end position="270"/>
    </location>
</feature>
<feature type="binding site" evidence="1">
    <location>
        <begin position="150"/>
        <end position="157"/>
    </location>
    <ligand>
        <name>ADP</name>
        <dbReference type="ChEBI" id="CHEBI:456216"/>
    </ligand>
</feature>
<dbReference type="EC" id="2.7.11.33" evidence="1"/>
<dbReference type="EC" id="2.7.4.28" evidence="1"/>
<dbReference type="EMBL" id="CP000447">
    <property type="protein sequence ID" value="ABI72144.1"/>
    <property type="molecule type" value="Genomic_DNA"/>
</dbReference>
<dbReference type="RefSeq" id="WP_011637753.1">
    <property type="nucleotide sequence ID" value="NC_008345.1"/>
</dbReference>
<dbReference type="SMR" id="Q081C1"/>
<dbReference type="STRING" id="318167.Sfri_2298"/>
<dbReference type="KEGG" id="sfr:Sfri_2298"/>
<dbReference type="eggNOG" id="COG1806">
    <property type="taxonomic scope" value="Bacteria"/>
</dbReference>
<dbReference type="HOGENOM" id="CLU_046206_1_0_6"/>
<dbReference type="OrthoDB" id="9782201at2"/>
<dbReference type="Proteomes" id="UP000000684">
    <property type="component" value="Chromosome"/>
</dbReference>
<dbReference type="GO" id="GO:0043531">
    <property type="term" value="F:ADP binding"/>
    <property type="evidence" value="ECO:0007669"/>
    <property type="project" value="UniProtKB-UniRule"/>
</dbReference>
<dbReference type="GO" id="GO:0005524">
    <property type="term" value="F:ATP binding"/>
    <property type="evidence" value="ECO:0007669"/>
    <property type="project" value="InterPro"/>
</dbReference>
<dbReference type="GO" id="GO:0016776">
    <property type="term" value="F:phosphotransferase activity, phosphate group as acceptor"/>
    <property type="evidence" value="ECO:0007669"/>
    <property type="project" value="UniProtKB-UniRule"/>
</dbReference>
<dbReference type="GO" id="GO:0004674">
    <property type="term" value="F:protein serine/threonine kinase activity"/>
    <property type="evidence" value="ECO:0007669"/>
    <property type="project" value="UniProtKB-UniRule"/>
</dbReference>
<dbReference type="HAMAP" id="MF_01062">
    <property type="entry name" value="PSRP"/>
    <property type="match status" value="1"/>
</dbReference>
<dbReference type="InterPro" id="IPR005177">
    <property type="entry name" value="Kinase-pyrophosphorylase"/>
</dbReference>
<dbReference type="InterPro" id="IPR026530">
    <property type="entry name" value="PSRP"/>
</dbReference>
<dbReference type="NCBIfam" id="NF003742">
    <property type="entry name" value="PRK05339.1"/>
    <property type="match status" value="1"/>
</dbReference>
<dbReference type="PANTHER" id="PTHR31756">
    <property type="entry name" value="PYRUVATE, PHOSPHATE DIKINASE REGULATORY PROTEIN 1, CHLOROPLASTIC"/>
    <property type="match status" value="1"/>
</dbReference>
<dbReference type="PANTHER" id="PTHR31756:SF3">
    <property type="entry name" value="PYRUVATE, PHOSPHATE DIKINASE REGULATORY PROTEIN 1, CHLOROPLASTIC"/>
    <property type="match status" value="1"/>
</dbReference>
<dbReference type="Pfam" id="PF03618">
    <property type="entry name" value="Kinase-PPPase"/>
    <property type="match status" value="1"/>
</dbReference>
<accession>Q081C1</accession>
<comment type="function">
    <text evidence="1">Bifunctional serine/threonine kinase and phosphorylase involved in the regulation of the phosphoenolpyruvate synthase (PEPS) by catalyzing its phosphorylation/dephosphorylation.</text>
</comment>
<comment type="catalytic activity">
    <reaction evidence="1">
        <text>[pyruvate, water dikinase] + ADP = [pyruvate, water dikinase]-phosphate + AMP + H(+)</text>
        <dbReference type="Rhea" id="RHEA:46020"/>
        <dbReference type="Rhea" id="RHEA-COMP:11425"/>
        <dbReference type="Rhea" id="RHEA-COMP:11426"/>
        <dbReference type="ChEBI" id="CHEBI:15378"/>
        <dbReference type="ChEBI" id="CHEBI:43176"/>
        <dbReference type="ChEBI" id="CHEBI:68546"/>
        <dbReference type="ChEBI" id="CHEBI:456215"/>
        <dbReference type="ChEBI" id="CHEBI:456216"/>
        <dbReference type="EC" id="2.7.11.33"/>
    </reaction>
</comment>
<comment type="catalytic activity">
    <reaction evidence="1">
        <text>[pyruvate, water dikinase]-phosphate + phosphate + H(+) = [pyruvate, water dikinase] + diphosphate</text>
        <dbReference type="Rhea" id="RHEA:48580"/>
        <dbReference type="Rhea" id="RHEA-COMP:11425"/>
        <dbReference type="Rhea" id="RHEA-COMP:11426"/>
        <dbReference type="ChEBI" id="CHEBI:15378"/>
        <dbReference type="ChEBI" id="CHEBI:33019"/>
        <dbReference type="ChEBI" id="CHEBI:43176"/>
        <dbReference type="ChEBI" id="CHEBI:43474"/>
        <dbReference type="ChEBI" id="CHEBI:68546"/>
        <dbReference type="EC" id="2.7.4.28"/>
    </reaction>
</comment>
<comment type="similarity">
    <text evidence="1">Belongs to the pyruvate, phosphate/water dikinase regulatory protein family. PSRP subfamily.</text>
</comment>
<sequence>MTPKVFYISDGTAITAEVFGHAVLSQFPIEFEALTIPFVETIQKAQKVKQQINDCFITTGERPLVFHSIINPEIRNVIFSSECVDYDFLNTFVAPLEQHLGVQAKPLLHRTHGKSNHGYETRIDAINYTMENDDGQTMKHMDKADIILLGVSRCGKTPSSLYLSMQFGIKAANYPFTEEDMDNLKLPEALKRNKSKLFGLTIDPHRLHEIRQSRMENSRYSSLRQCRLEVKEVEMLYKKERIPFVNTTNHSVEEIATKILDITGLERHMF</sequence>
<proteinExistence type="inferred from homology"/>
<protein>
    <recommendedName>
        <fullName evidence="1">Putative phosphoenolpyruvate synthase regulatory protein</fullName>
        <shortName evidence="1">PEP synthase regulatory protein</shortName>
        <shortName evidence="1">PSRP</shortName>
        <ecNumber evidence="1">2.7.11.33</ecNumber>
        <ecNumber evidence="1">2.7.4.28</ecNumber>
    </recommendedName>
    <alternativeName>
        <fullName evidence="1">Pyruvate, water dikinase regulatory protein</fullName>
    </alternativeName>
</protein>
<evidence type="ECO:0000255" key="1">
    <source>
        <dbReference type="HAMAP-Rule" id="MF_01062"/>
    </source>
</evidence>
<gene>
    <name type="ordered locus">Sfri_2298</name>
</gene>
<reference key="1">
    <citation type="submission" date="2006-08" db="EMBL/GenBank/DDBJ databases">
        <title>Complete sequence of Shewanella frigidimarina NCIMB 400.</title>
        <authorList>
            <consortium name="US DOE Joint Genome Institute"/>
            <person name="Copeland A."/>
            <person name="Lucas S."/>
            <person name="Lapidus A."/>
            <person name="Barry K."/>
            <person name="Detter J.C."/>
            <person name="Glavina del Rio T."/>
            <person name="Hammon N."/>
            <person name="Israni S."/>
            <person name="Dalin E."/>
            <person name="Tice H."/>
            <person name="Pitluck S."/>
            <person name="Fredrickson J.K."/>
            <person name="Kolker E."/>
            <person name="McCuel L.A."/>
            <person name="DiChristina T."/>
            <person name="Nealson K.H."/>
            <person name="Newman D."/>
            <person name="Tiedje J.M."/>
            <person name="Zhou J."/>
            <person name="Romine M.F."/>
            <person name="Culley D.E."/>
            <person name="Serres M."/>
            <person name="Chertkov O."/>
            <person name="Brettin T."/>
            <person name="Bruce D."/>
            <person name="Han C."/>
            <person name="Tapia R."/>
            <person name="Gilna P."/>
            <person name="Schmutz J."/>
            <person name="Larimer F."/>
            <person name="Land M."/>
            <person name="Hauser L."/>
            <person name="Kyrpides N."/>
            <person name="Mikhailova N."/>
            <person name="Richardson P."/>
        </authorList>
    </citation>
    <scope>NUCLEOTIDE SEQUENCE [LARGE SCALE GENOMIC DNA]</scope>
    <source>
        <strain>NCIMB 400</strain>
    </source>
</reference>
<name>PSRP_SHEFN</name>